<evidence type="ECO:0000255" key="1">
    <source>
        <dbReference type="HAMAP-Rule" id="MF_01599"/>
    </source>
</evidence>
<keyword id="KW-0050">Antiport</keyword>
<keyword id="KW-0997">Cell inner membrane</keyword>
<keyword id="KW-1003">Cell membrane</keyword>
<keyword id="KW-0406">Ion transport</keyword>
<keyword id="KW-0472">Membrane</keyword>
<keyword id="KW-1185">Reference proteome</keyword>
<keyword id="KW-0915">Sodium</keyword>
<keyword id="KW-0739">Sodium transport</keyword>
<keyword id="KW-0812">Transmembrane</keyword>
<keyword id="KW-1133">Transmembrane helix</keyword>
<keyword id="KW-0813">Transport</keyword>
<reference key="1">
    <citation type="journal article" date="2005" name="Nucleic Acids Res.">
        <title>Genome dynamics and diversity of Shigella species, the etiologic agents of bacillary dysentery.</title>
        <authorList>
            <person name="Yang F."/>
            <person name="Yang J."/>
            <person name="Zhang X."/>
            <person name="Chen L."/>
            <person name="Jiang Y."/>
            <person name="Yan Y."/>
            <person name="Tang X."/>
            <person name="Wang J."/>
            <person name="Xiong Z."/>
            <person name="Dong J."/>
            <person name="Xue Y."/>
            <person name="Zhu Y."/>
            <person name="Xu X."/>
            <person name="Sun L."/>
            <person name="Chen S."/>
            <person name="Nie H."/>
            <person name="Peng J."/>
            <person name="Xu J."/>
            <person name="Wang Y."/>
            <person name="Yuan Z."/>
            <person name="Wen Y."/>
            <person name="Yao Z."/>
            <person name="Shen Y."/>
            <person name="Qiang B."/>
            <person name="Hou Y."/>
            <person name="Yu J."/>
            <person name="Jin Q."/>
        </authorList>
    </citation>
    <scope>NUCLEOTIDE SEQUENCE [LARGE SCALE GENOMIC DNA]</scope>
    <source>
        <strain>Sd197</strain>
    </source>
</reference>
<accession>Q32H30</accession>
<feature type="chain" id="PRO_0000333140" description="Na(+)/H(+) antiporter NhaB">
    <location>
        <begin position="1"/>
        <end position="513"/>
    </location>
</feature>
<feature type="transmembrane region" description="Helical" evidence="1">
    <location>
        <begin position="23"/>
        <end position="43"/>
    </location>
</feature>
<feature type="transmembrane region" description="Helical" evidence="1">
    <location>
        <begin position="52"/>
        <end position="72"/>
    </location>
</feature>
<feature type="transmembrane region" description="Helical" evidence="1">
    <location>
        <begin position="97"/>
        <end position="117"/>
    </location>
</feature>
<feature type="transmembrane region" description="Helical" evidence="1">
    <location>
        <begin position="120"/>
        <end position="140"/>
    </location>
</feature>
<feature type="transmembrane region" description="Helical" evidence="1">
    <location>
        <begin position="144"/>
        <end position="164"/>
    </location>
</feature>
<feature type="transmembrane region" description="Helical" evidence="1">
    <location>
        <begin position="202"/>
        <end position="222"/>
    </location>
</feature>
<feature type="transmembrane region" description="Helical" evidence="1">
    <location>
        <begin position="238"/>
        <end position="258"/>
    </location>
</feature>
<feature type="transmembrane region" description="Helical" evidence="1">
    <location>
        <begin position="303"/>
        <end position="323"/>
    </location>
</feature>
<feature type="transmembrane region" description="Helical" evidence="1">
    <location>
        <begin position="348"/>
        <end position="368"/>
    </location>
</feature>
<feature type="transmembrane region" description="Helical" evidence="1">
    <location>
        <begin position="391"/>
        <end position="411"/>
    </location>
</feature>
<feature type="transmembrane region" description="Helical" evidence="1">
    <location>
        <begin position="447"/>
        <end position="467"/>
    </location>
</feature>
<feature type="transmembrane region" description="Helical" evidence="1">
    <location>
        <begin position="475"/>
        <end position="495"/>
    </location>
</feature>
<gene>
    <name evidence="1" type="primary">nhaB</name>
    <name type="ordered locus">SDY_1223</name>
</gene>
<name>NHAB_SHIDS</name>
<sequence>MEISWGRALWRNFLGQSPDWYKLALIIFLIVNPLIFLISPFVAGWLLVAEFIFTLAMALKCYPLLPGGLLAIEAVFIGMTSAEHVREEVAANLEVLLLLMFMVAGIYFMKQLLLFIFTRLLLSIRSKMLLSLSFCVAAAFLSAFLDALTVVAVVISVAVGFYGIYHRVASSRTEDTDLQDDSHIDKHYKVVLEQFRGFLRSLMMHAGVGTALGGVMTMVGEPQNLIIAKAAGWHFGDFFLRMSPVTVPVLICGLLTCLLVEKLRWFGYGETLPEKVREVLQQFDDQSRHQRTRQDKIRLIVQAIIGVWLVTALALHLAEVGLIGLSVIILATSLTGVTDEHAIGKAFTESLPFTALLTVFFSVVAVIIDQQLFSPIIQFVLQASEHAQLSLFYIFNGLLSSISDNVFVGTIYINEAKAAMESGAITLKQYELLAVAINTGTNLPSVATPNGQAAFLFLLTSALAPLIRLSYGRMVWMALPYTLVLTLVGLLCVEFTLAPVTEWFMQMGWIATL</sequence>
<comment type="function">
    <text evidence="1">Na(+)/H(+) antiporter that extrudes sodium in exchange for external protons.</text>
</comment>
<comment type="catalytic activity">
    <reaction evidence="1">
        <text>2 Na(+)(in) + 3 H(+)(out) = 2 Na(+)(out) + 3 H(+)(in)</text>
        <dbReference type="Rhea" id="RHEA:29247"/>
        <dbReference type="ChEBI" id="CHEBI:15378"/>
        <dbReference type="ChEBI" id="CHEBI:29101"/>
    </reaction>
    <physiologicalReaction direction="left-to-right" evidence="1">
        <dbReference type="Rhea" id="RHEA:29248"/>
    </physiologicalReaction>
</comment>
<comment type="subcellular location">
    <subcellularLocation>
        <location evidence="1">Cell inner membrane</location>
        <topology evidence="1">Multi-pass membrane protein</topology>
    </subcellularLocation>
</comment>
<comment type="similarity">
    <text evidence="1">Belongs to the NhaB Na(+)/H(+) (TC 2.A.34) antiporter family.</text>
</comment>
<dbReference type="EMBL" id="CP000034">
    <property type="protein sequence ID" value="ABB61375.1"/>
    <property type="molecule type" value="Genomic_DNA"/>
</dbReference>
<dbReference type="RefSeq" id="WP_000406391.1">
    <property type="nucleotide sequence ID" value="NC_007606.1"/>
</dbReference>
<dbReference type="RefSeq" id="YP_402866.1">
    <property type="nucleotide sequence ID" value="NC_007606.1"/>
</dbReference>
<dbReference type="SMR" id="Q32H30"/>
<dbReference type="STRING" id="300267.SDY_1223"/>
<dbReference type="EnsemblBacteria" id="ABB61375">
    <property type="protein sequence ID" value="ABB61375"/>
    <property type="gene ID" value="SDY_1223"/>
</dbReference>
<dbReference type="GeneID" id="75203299"/>
<dbReference type="KEGG" id="sdy:SDY_1223"/>
<dbReference type="PATRIC" id="fig|300267.13.peg.1451"/>
<dbReference type="HOGENOM" id="CLU_041110_0_0_6"/>
<dbReference type="Proteomes" id="UP000002716">
    <property type="component" value="Chromosome"/>
</dbReference>
<dbReference type="GO" id="GO:0005886">
    <property type="term" value="C:plasma membrane"/>
    <property type="evidence" value="ECO:0007669"/>
    <property type="project" value="UniProtKB-SubCell"/>
</dbReference>
<dbReference type="GO" id="GO:0015385">
    <property type="term" value="F:sodium:proton antiporter activity"/>
    <property type="evidence" value="ECO:0007669"/>
    <property type="project" value="InterPro"/>
</dbReference>
<dbReference type="HAMAP" id="MF_01599">
    <property type="entry name" value="NhaB"/>
    <property type="match status" value="1"/>
</dbReference>
<dbReference type="InterPro" id="IPR004671">
    <property type="entry name" value="Na+/H+_antiporter_NhaB"/>
</dbReference>
<dbReference type="NCBIfam" id="TIGR00774">
    <property type="entry name" value="NhaB"/>
    <property type="match status" value="1"/>
</dbReference>
<dbReference type="NCBIfam" id="NF007093">
    <property type="entry name" value="PRK09547.1"/>
    <property type="match status" value="1"/>
</dbReference>
<dbReference type="PANTHER" id="PTHR43302:SF1">
    <property type="entry name" value="NA(+)_H(+) ANTIPORTER NHAB"/>
    <property type="match status" value="1"/>
</dbReference>
<dbReference type="PANTHER" id="PTHR43302">
    <property type="entry name" value="TRANSPORTER ARSB-RELATED"/>
    <property type="match status" value="1"/>
</dbReference>
<dbReference type="Pfam" id="PF06450">
    <property type="entry name" value="NhaB"/>
    <property type="match status" value="1"/>
</dbReference>
<proteinExistence type="inferred from homology"/>
<protein>
    <recommendedName>
        <fullName evidence="1">Na(+)/H(+) antiporter NhaB</fullName>
    </recommendedName>
    <alternativeName>
        <fullName evidence="1">Sodium/proton antiporter NhaB</fullName>
    </alternativeName>
</protein>
<organism>
    <name type="scientific">Shigella dysenteriae serotype 1 (strain Sd197)</name>
    <dbReference type="NCBI Taxonomy" id="300267"/>
    <lineage>
        <taxon>Bacteria</taxon>
        <taxon>Pseudomonadati</taxon>
        <taxon>Pseudomonadota</taxon>
        <taxon>Gammaproteobacteria</taxon>
        <taxon>Enterobacterales</taxon>
        <taxon>Enterobacteriaceae</taxon>
        <taxon>Shigella</taxon>
    </lineage>
</organism>